<dbReference type="EC" id="2.-.-.-"/>
<dbReference type="EMBL" id="U25839">
    <property type="protein sequence ID" value="AAC44086.1"/>
    <property type="molecule type" value="Genomic_DNA"/>
</dbReference>
<dbReference type="EMBL" id="AE002098">
    <property type="protein sequence ID" value="AAF42255.1"/>
    <property type="molecule type" value="Genomic_DNA"/>
</dbReference>
<dbReference type="PIR" id="A81027">
    <property type="entry name" value="A81027"/>
</dbReference>
<dbReference type="PIR" id="S70815">
    <property type="entry name" value="S70815"/>
</dbReference>
<dbReference type="RefSeq" id="NP_274920.1">
    <property type="nucleotide sequence ID" value="NC_003112.2"/>
</dbReference>
<dbReference type="RefSeq" id="WP_002225823.1">
    <property type="nucleotide sequence ID" value="NC_003112.2"/>
</dbReference>
<dbReference type="SMR" id="Q51117"/>
<dbReference type="STRING" id="122586.NMB1926"/>
<dbReference type="CAZy" id="GT25">
    <property type="family name" value="Glycosyltransferase Family 25"/>
</dbReference>
<dbReference type="PaxDb" id="122586-NMB1926"/>
<dbReference type="KEGG" id="nme:NMB1926"/>
<dbReference type="PATRIC" id="fig|122586.8.peg.2455"/>
<dbReference type="HOGENOM" id="CLU_071269_2_0_4"/>
<dbReference type="InParanoid" id="Q51117"/>
<dbReference type="OrthoDB" id="119742at2"/>
<dbReference type="UniPathway" id="UPA00501"/>
<dbReference type="UniPathway" id="UPA00820"/>
<dbReference type="Proteomes" id="UP000000425">
    <property type="component" value="Chromosome"/>
</dbReference>
<dbReference type="GO" id="GO:0016757">
    <property type="term" value="F:glycosyltransferase activity"/>
    <property type="evidence" value="ECO:0007669"/>
    <property type="project" value="UniProtKB-KW"/>
</dbReference>
<dbReference type="GO" id="GO:0009103">
    <property type="term" value="P:lipopolysaccharide biosynthetic process"/>
    <property type="evidence" value="ECO:0007669"/>
    <property type="project" value="UniProtKB-KW"/>
</dbReference>
<dbReference type="CDD" id="cd06532">
    <property type="entry name" value="Glyco_transf_25"/>
    <property type="match status" value="1"/>
</dbReference>
<dbReference type="InterPro" id="IPR002654">
    <property type="entry name" value="Glyco_trans_25"/>
</dbReference>
<dbReference type="Pfam" id="PF01755">
    <property type="entry name" value="Glyco_transf_25"/>
    <property type="match status" value="1"/>
</dbReference>
<protein>
    <recommendedName>
        <fullName>Lacto-N-neotetraose biosynthesis glycosyltransferase LgtE</fullName>
        <ecNumber>2.-.-.-</ecNumber>
    </recommendedName>
</protein>
<feature type="chain" id="PRO_0000216239" description="Lacto-N-neotetraose biosynthesis glycosyltransferase LgtE">
    <location>
        <begin position="1"/>
        <end position="280"/>
    </location>
</feature>
<feature type="sequence conflict" description="In Ref. 1; AAC44086." evidence="1" ref="1">
    <original>A</original>
    <variation>G</variation>
    <location>
        <position position="16"/>
    </location>
</feature>
<feature type="sequence conflict" description="In Ref. 1; AAC44086." evidence="1" ref="1">
    <location>
        <begin position="89"/>
        <end position="92"/>
    </location>
</feature>
<feature type="sequence conflict" description="In Ref. 1; AAC44086." evidence="1" ref="1">
    <original>EWI</original>
    <variation>RVD</variation>
    <location>
        <begin position="176"/>
        <end position="178"/>
    </location>
</feature>
<comment type="function">
    <text>Adds the first galactose to the lacto-N-tetraose chain in lipooligosaccharide (LOS).</text>
</comment>
<comment type="pathway">
    <text>Glycan metabolism; lacto-N-neotetraose biosynthesis.</text>
</comment>
<comment type="pathway">
    <text>Bacterial outer membrane biogenesis; lipooligosaccharide biosynthesis.</text>
</comment>
<comment type="similarity">
    <text evidence="1">Belongs to the glycosyltransferase 25 family.</text>
</comment>
<gene>
    <name type="primary">lgtE</name>
    <name type="ordered locus">NMB1926</name>
</gene>
<evidence type="ECO:0000305" key="1"/>
<proteinExistence type="inferred from homology"/>
<sequence length="280" mass="32790">MQNHVISLASAAERRAHIAATFGVRGIPFQFFDALMPSEELNRMMAELVPGLAKQHLLSEVEKACFMSHAVLWKQALDEGLPYVAVFEDDVLLGKDAEKFLAEDTWLEERFDKDSAFIVRLETMFAKVIVRPDKVLNYENRSFPLLESEHWGTAGYIISREAMRFFLERFAVLPAEWIKAVDWMMFTYFFDKEGMPVYQVNPALCTQELHYAKFLSKNSMLGSDLEKDREQERRHRRSLKVMFDLKRALGKFGREKKKRMERQRQAELEKAYGRRVISFK</sequence>
<reference key="1">
    <citation type="journal article" date="1995" name="Mol. Microbiol.">
        <title>Molecular analysis of a locus for the biosynthesis and phase-variable expression of the lacto-N-neotetraose terminal lipopolysaccharide structure in Neisseria meningitidis.</title>
        <authorList>
            <person name="Jennings M.P."/>
            <person name="Hood D."/>
            <person name="Peak I.R.A."/>
            <person name="Virji M."/>
            <person name="Moxon E.R."/>
        </authorList>
    </citation>
    <scope>NUCLEOTIDE SEQUENCE [GENOMIC DNA]</scope>
    <source>
        <strain>ATCC BAA-335 / MC58</strain>
    </source>
</reference>
<reference key="2">
    <citation type="journal article" date="2000" name="Science">
        <title>Complete genome sequence of Neisseria meningitidis serogroup B strain MC58.</title>
        <authorList>
            <person name="Tettelin H."/>
            <person name="Saunders N.J."/>
            <person name="Heidelberg J.F."/>
            <person name="Jeffries A.C."/>
            <person name="Nelson K.E."/>
            <person name="Eisen J.A."/>
            <person name="Ketchum K.A."/>
            <person name="Hood D.W."/>
            <person name="Peden J.F."/>
            <person name="Dodson R.J."/>
            <person name="Nelson W.C."/>
            <person name="Gwinn M.L."/>
            <person name="DeBoy R.T."/>
            <person name="Peterson J.D."/>
            <person name="Hickey E.K."/>
            <person name="Haft D.H."/>
            <person name="Salzberg S.L."/>
            <person name="White O."/>
            <person name="Fleischmann R.D."/>
            <person name="Dougherty B.A."/>
            <person name="Mason T.M."/>
            <person name="Ciecko A."/>
            <person name="Parksey D.S."/>
            <person name="Blair E."/>
            <person name="Cittone H."/>
            <person name="Clark E.B."/>
            <person name="Cotton M.D."/>
            <person name="Utterback T.R."/>
            <person name="Khouri H.M."/>
            <person name="Qin H."/>
            <person name="Vamathevan J.J."/>
            <person name="Gill J."/>
            <person name="Scarlato V."/>
            <person name="Masignani V."/>
            <person name="Pizza M."/>
            <person name="Grandi G."/>
            <person name="Sun L."/>
            <person name="Smith H.O."/>
            <person name="Fraser C.M."/>
            <person name="Moxon E.R."/>
            <person name="Rappuoli R."/>
            <person name="Venter J.C."/>
        </authorList>
    </citation>
    <scope>NUCLEOTIDE SEQUENCE [LARGE SCALE GENOMIC DNA]</scope>
    <source>
        <strain>ATCC BAA-335 / MC58</strain>
    </source>
</reference>
<accession>Q51117</accession>
<organism>
    <name type="scientific">Neisseria meningitidis serogroup B (strain ATCC BAA-335 / MC58)</name>
    <dbReference type="NCBI Taxonomy" id="122586"/>
    <lineage>
        <taxon>Bacteria</taxon>
        <taxon>Pseudomonadati</taxon>
        <taxon>Pseudomonadota</taxon>
        <taxon>Betaproteobacteria</taxon>
        <taxon>Neisseriales</taxon>
        <taxon>Neisseriaceae</taxon>
        <taxon>Neisseria</taxon>
    </lineage>
</organism>
<keyword id="KW-0328">Glycosyltransferase</keyword>
<keyword id="KW-0448">Lipopolysaccharide biosynthesis</keyword>
<keyword id="KW-1185">Reference proteome</keyword>
<keyword id="KW-0808">Transferase</keyword>
<name>LGTE_NEIMB</name>